<evidence type="ECO:0000250" key="1">
    <source>
        <dbReference type="UniProtKB" id="P31723"/>
    </source>
</evidence>
<evidence type="ECO:0000250" key="2">
    <source>
        <dbReference type="UniProtKB" id="P32906"/>
    </source>
</evidence>
<evidence type="ECO:0000250" key="3">
    <source>
        <dbReference type="UniProtKB" id="P45700"/>
    </source>
</evidence>
<evidence type="ECO:0000255" key="4"/>
<evidence type="ECO:0000256" key="5">
    <source>
        <dbReference type="SAM" id="MobiDB-lite"/>
    </source>
</evidence>
<evidence type="ECO:0000305" key="6"/>
<evidence type="ECO:0007744" key="7">
    <source>
    </source>
</evidence>
<accession>Q9NR34</accession>
<accession>A6NNE2</accession>
<accession>B2RNP2</accession>
<accession>Q9Y545</accession>
<comment type="function">
    <text>Involved in the maturation of Asn-linked oligosaccharides. Trim alpha-1,2-linked mannose residues from Man(9)GlcNAc(2) to produce first Man(8)GlcNAc(2) then Man(6)GlcNAc and a small amount of Man(5)GlcNAc.</text>
</comment>
<comment type="catalytic activity">
    <reaction evidence="2">
        <text>N(4)-(alpha-D-Man-(1-&gt;2)-alpha-D-Man-(1-&gt;2)-alpha-D-Man-(1-&gt;3)-[alpha-D-Man-(1-&gt;2)-alpha-D-Man-(1-&gt;3)-[alpha-D-Man-(1-&gt;2)-alpha-D-Man-(1-&gt;6)]-alpha-D-Man-(1-&gt;6)]-beta-D-Man-(1-&gt;4)-beta-D-GlcNAc-(1-&gt;4)-beta-D-GlcNAc)-L-asparaginyl-[protein] (N-glucan mannose isomer 9A1,2,3B1,2,3) + 4 H2O = N(4)-(alpha-D-Man-(1-&gt;3)-[alpha-D-Man-(1-&gt;3)-[alpha-D-Man-(1-&gt;6)]-alpha-D-Man-(1-&gt;6)]-beta-D-Man-(1-&gt;4)-beta-D-GlcNAc-(1-&gt;4)-beta-D-GlcNAc)-L-asparaginyl-[protein] (N-glucan mannose isomer 5A1,2) + 4 beta-D-mannose</text>
        <dbReference type="Rhea" id="RHEA:56008"/>
        <dbReference type="Rhea" id="RHEA-COMP:14356"/>
        <dbReference type="Rhea" id="RHEA-COMP:14367"/>
        <dbReference type="ChEBI" id="CHEBI:15377"/>
        <dbReference type="ChEBI" id="CHEBI:28563"/>
        <dbReference type="ChEBI" id="CHEBI:59087"/>
        <dbReference type="ChEBI" id="CHEBI:139493"/>
        <dbReference type="EC" id="3.2.1.113"/>
    </reaction>
</comment>
<comment type="catalytic activity">
    <reaction evidence="2">
        <text>N(4)-(alpha-D-Man-(1-&gt;2)-alpha-D-Man-(1-&gt;2)-alpha-D-Man-(1-&gt;3)-[alpha-D-Man-(1-&gt;3)-[alpha-D-Man-(1-&gt;2)-alpha-D-Man-(1-&gt;6)]-alpha-D-Man-(1-&gt;6)]-beta-D-Man-(1-&gt;4)-beta-D-GlcNAc-(1-&gt;4)-beta-D-GlcNAc)-L-asparaginyl-[protein] (N-glucan mannose isomer 8A1,2,3B1,3) + 3 H2O = N(4)-(alpha-D-Man-(1-&gt;3)-[alpha-D-Man-(1-&gt;3)-[alpha-D-Man-(1-&gt;6)]-alpha-D-Man-(1-&gt;6)]-beta-D-Man-(1-&gt;4)-beta-D-GlcNAc-(1-&gt;4)-beta-D-GlcNAc)-L-asparaginyl-[protein] (N-glucan mannose isomer 5A1,2) + 3 beta-D-mannose</text>
        <dbReference type="Rhea" id="RHEA:56028"/>
        <dbReference type="Rhea" id="RHEA-COMP:14358"/>
        <dbReference type="Rhea" id="RHEA-COMP:14367"/>
        <dbReference type="ChEBI" id="CHEBI:15377"/>
        <dbReference type="ChEBI" id="CHEBI:28563"/>
        <dbReference type="ChEBI" id="CHEBI:59087"/>
        <dbReference type="ChEBI" id="CHEBI:60628"/>
        <dbReference type="EC" id="3.2.1.113"/>
    </reaction>
</comment>
<comment type="cofactor">
    <cofactor evidence="3">
        <name>Ca(2+)</name>
        <dbReference type="ChEBI" id="CHEBI:29108"/>
    </cofactor>
</comment>
<comment type="activity regulation">
    <text>Inhibited by both 1-deoxymannojirimycin and kifunensine.</text>
</comment>
<comment type="pathway">
    <text evidence="2">Protein modification; protein glycosylation.</text>
</comment>
<comment type="interaction">
    <interactant intactId="EBI-7260764">
        <id>Q9NR34</id>
    </interactant>
    <interactant intactId="EBI-2513774">
        <id>O95363</id>
        <label>FARS2</label>
    </interactant>
    <organismsDiffer>false</organismsDiffer>
    <experiments>3</experiments>
</comment>
<comment type="interaction">
    <interactant intactId="EBI-7260764">
        <id>Q9NR34</id>
    </interactant>
    <interactant intactId="EBI-709754">
        <id>Q9HB07</id>
        <label>MYG1</label>
    </interactant>
    <organismsDiffer>false</organismsDiffer>
    <experiments>3</experiments>
</comment>
<comment type="subcellular location">
    <subcellularLocation>
        <location>Golgi apparatus membrane</location>
        <topology>Single-pass type II membrane protein</topology>
    </subcellularLocation>
</comment>
<comment type="tissue specificity">
    <text>Expressed in most tissues with the exception of lung, muscle and pancreas. Highly expressed in placenta.</text>
</comment>
<comment type="similarity">
    <text evidence="6">Belongs to the glycosyl hydrolase 47 family.</text>
</comment>
<dbReference type="EC" id="3.2.1.113" evidence="2"/>
<dbReference type="EMBL" id="AF261655">
    <property type="protein sequence ID" value="AAF97058.1"/>
    <property type="molecule type" value="mRNA"/>
</dbReference>
<dbReference type="EMBL" id="AL020996">
    <property type="status" value="NOT_ANNOTATED_CDS"/>
    <property type="molecule type" value="Genomic_DNA"/>
</dbReference>
<dbReference type="EMBL" id="AL031280">
    <property type="status" value="NOT_ANNOTATED_CDS"/>
    <property type="molecule type" value="Genomic_DNA"/>
</dbReference>
<dbReference type="EMBL" id="BC137017">
    <property type="protein sequence ID" value="AAI37018.1"/>
    <property type="molecule type" value="mRNA"/>
</dbReference>
<dbReference type="CCDS" id="CCDS265.1"/>
<dbReference type="RefSeq" id="NP_001275939.1">
    <property type="nucleotide sequence ID" value="NM_001289010.1"/>
</dbReference>
<dbReference type="RefSeq" id="NP_065112.1">
    <property type="nucleotide sequence ID" value="NM_020379.4"/>
</dbReference>
<dbReference type="SMR" id="Q9NR34"/>
<dbReference type="BioGRID" id="121395">
    <property type="interactions" value="5"/>
</dbReference>
<dbReference type="FunCoup" id="Q9NR34">
    <property type="interactions" value="1027"/>
</dbReference>
<dbReference type="IntAct" id="Q9NR34">
    <property type="interactions" value="5"/>
</dbReference>
<dbReference type="MINT" id="Q9NR34"/>
<dbReference type="STRING" id="9606.ENSP00000363452"/>
<dbReference type="CAZy" id="GH47">
    <property type="family name" value="Glycoside Hydrolase Family 47"/>
</dbReference>
<dbReference type="GlyCosmos" id="Q9NR34">
    <property type="glycosylation" value="6 sites, 2 glycans"/>
</dbReference>
<dbReference type="GlyGen" id="Q9NR34">
    <property type="glycosylation" value="7 sites, 3 O-linked glycans (5 sites)"/>
</dbReference>
<dbReference type="iPTMnet" id="Q9NR34"/>
<dbReference type="PhosphoSitePlus" id="Q9NR34"/>
<dbReference type="BioMuta" id="MAN1C1"/>
<dbReference type="DMDM" id="17369308"/>
<dbReference type="MassIVE" id="Q9NR34"/>
<dbReference type="PaxDb" id="9606-ENSP00000363452"/>
<dbReference type="PeptideAtlas" id="Q9NR34"/>
<dbReference type="ProteomicsDB" id="82269"/>
<dbReference type="Antibodypedia" id="30480">
    <property type="antibodies" value="55 antibodies from 16 providers"/>
</dbReference>
<dbReference type="DNASU" id="57134"/>
<dbReference type="Ensembl" id="ENST00000374332.9">
    <property type="protein sequence ID" value="ENSP00000363452.4"/>
    <property type="gene ID" value="ENSG00000117643.16"/>
</dbReference>
<dbReference type="GeneID" id="57134"/>
<dbReference type="KEGG" id="hsa:57134"/>
<dbReference type="MANE-Select" id="ENST00000374332.9">
    <property type="protein sequence ID" value="ENSP00000363452.4"/>
    <property type="RefSeq nucleotide sequence ID" value="NM_020379.4"/>
    <property type="RefSeq protein sequence ID" value="NP_065112.1"/>
</dbReference>
<dbReference type="UCSC" id="uc001bkm.3">
    <property type="organism name" value="human"/>
</dbReference>
<dbReference type="AGR" id="HGNC:19080"/>
<dbReference type="CTD" id="57134"/>
<dbReference type="DisGeNET" id="57134"/>
<dbReference type="GeneCards" id="MAN1C1"/>
<dbReference type="HGNC" id="HGNC:19080">
    <property type="gene designation" value="MAN1C1"/>
</dbReference>
<dbReference type="HPA" id="ENSG00000117643">
    <property type="expression patterns" value="Low tissue specificity"/>
</dbReference>
<dbReference type="neXtProt" id="NX_Q9NR34"/>
<dbReference type="OpenTargets" id="ENSG00000117643"/>
<dbReference type="PharmGKB" id="PA38788"/>
<dbReference type="VEuPathDB" id="HostDB:ENSG00000117643"/>
<dbReference type="eggNOG" id="KOG2204">
    <property type="taxonomic scope" value="Eukaryota"/>
</dbReference>
<dbReference type="GeneTree" id="ENSGT00940000159312"/>
<dbReference type="InParanoid" id="Q9NR34"/>
<dbReference type="OMA" id="NICFACL"/>
<dbReference type="OrthoDB" id="8118055at2759"/>
<dbReference type="PAN-GO" id="Q9NR34">
    <property type="GO annotations" value="4 GO annotations based on evolutionary models"/>
</dbReference>
<dbReference type="PhylomeDB" id="Q9NR34"/>
<dbReference type="TreeFam" id="TF313420"/>
<dbReference type="BioCyc" id="MetaCyc:HS04162-MONOMER"/>
<dbReference type="BRENDA" id="3.2.1.113">
    <property type="organism ID" value="2681"/>
</dbReference>
<dbReference type="PathwayCommons" id="Q9NR34"/>
<dbReference type="Reactome" id="R-HSA-6811438">
    <property type="pathway name" value="Intra-Golgi traffic"/>
</dbReference>
<dbReference type="Reactome" id="R-HSA-964827">
    <property type="pathway name" value="Progressive trimming of alpha-1,2-linked mannose residues from Man9/8/7GlcNAc2 to produce Man5GlcNAc2"/>
</dbReference>
<dbReference type="SignaLink" id="Q9NR34"/>
<dbReference type="UniPathway" id="UPA00378"/>
<dbReference type="BioGRID-ORCS" id="57134">
    <property type="hits" value="18 hits in 1148 CRISPR screens"/>
</dbReference>
<dbReference type="ChiTaRS" id="MAN1C1">
    <property type="organism name" value="human"/>
</dbReference>
<dbReference type="GenomeRNAi" id="57134"/>
<dbReference type="Pharos" id="Q9NR34">
    <property type="development level" value="Tbio"/>
</dbReference>
<dbReference type="PRO" id="PR:Q9NR34"/>
<dbReference type="Proteomes" id="UP000005640">
    <property type="component" value="Chromosome 1"/>
</dbReference>
<dbReference type="RNAct" id="Q9NR34">
    <property type="molecule type" value="protein"/>
</dbReference>
<dbReference type="Bgee" id="ENSG00000117643">
    <property type="expression patterns" value="Expressed in pigmented layer of retina and 187 other cell types or tissues"/>
</dbReference>
<dbReference type="ExpressionAtlas" id="Q9NR34">
    <property type="expression patterns" value="baseline and differential"/>
</dbReference>
<dbReference type="GO" id="GO:0005783">
    <property type="term" value="C:endoplasmic reticulum"/>
    <property type="evidence" value="ECO:0000318"/>
    <property type="project" value="GO_Central"/>
</dbReference>
<dbReference type="GO" id="GO:0070062">
    <property type="term" value="C:extracellular exosome"/>
    <property type="evidence" value="ECO:0007005"/>
    <property type="project" value="UniProtKB"/>
</dbReference>
<dbReference type="GO" id="GO:0000139">
    <property type="term" value="C:Golgi membrane"/>
    <property type="evidence" value="ECO:0000318"/>
    <property type="project" value="GO_Central"/>
</dbReference>
<dbReference type="GO" id="GO:0005509">
    <property type="term" value="F:calcium ion binding"/>
    <property type="evidence" value="ECO:0000304"/>
    <property type="project" value="UniProtKB"/>
</dbReference>
<dbReference type="GO" id="GO:0004571">
    <property type="term" value="F:mannosyl-oligosaccharide 1,2-alpha-mannosidase activity"/>
    <property type="evidence" value="ECO:0000318"/>
    <property type="project" value="GO_Central"/>
</dbReference>
<dbReference type="GO" id="GO:0005975">
    <property type="term" value="P:carbohydrate metabolic process"/>
    <property type="evidence" value="ECO:0007669"/>
    <property type="project" value="InterPro"/>
</dbReference>
<dbReference type="GO" id="GO:0036503">
    <property type="term" value="P:ERAD pathway"/>
    <property type="evidence" value="ECO:0000318"/>
    <property type="project" value="GO_Central"/>
</dbReference>
<dbReference type="GO" id="GO:1904381">
    <property type="term" value="P:Golgi apparatus mannose trimming"/>
    <property type="evidence" value="ECO:0000304"/>
    <property type="project" value="Reactome"/>
</dbReference>
<dbReference type="GO" id="GO:0006487">
    <property type="term" value="P:protein N-linked glycosylation"/>
    <property type="evidence" value="ECO:0000304"/>
    <property type="project" value="UniProtKB"/>
</dbReference>
<dbReference type="FunFam" id="1.50.10.10:FF:000017">
    <property type="entry name" value="alpha-1,2-Mannosidase"/>
    <property type="match status" value="1"/>
</dbReference>
<dbReference type="Gene3D" id="1.50.10.10">
    <property type="match status" value="1"/>
</dbReference>
<dbReference type="InterPro" id="IPR012341">
    <property type="entry name" value="6hp_glycosidase-like_sf"/>
</dbReference>
<dbReference type="InterPro" id="IPR001382">
    <property type="entry name" value="Glyco_hydro_47"/>
</dbReference>
<dbReference type="InterPro" id="IPR050749">
    <property type="entry name" value="Glycosyl_Hydrolase_47"/>
</dbReference>
<dbReference type="InterPro" id="IPR036026">
    <property type="entry name" value="Seven-hairpin_glycosidases"/>
</dbReference>
<dbReference type="PANTHER" id="PTHR11742:SF28">
    <property type="entry name" value="MANNOSYL-OLIGOSACCHARIDE 1,2-ALPHA-MANNOSIDASE IC"/>
    <property type="match status" value="1"/>
</dbReference>
<dbReference type="PANTHER" id="PTHR11742">
    <property type="entry name" value="MANNOSYL-OLIGOSACCHARIDE ALPHA-1,2-MANNOSIDASE-RELATED"/>
    <property type="match status" value="1"/>
</dbReference>
<dbReference type="Pfam" id="PF01532">
    <property type="entry name" value="Glyco_hydro_47"/>
    <property type="match status" value="1"/>
</dbReference>
<dbReference type="PRINTS" id="PR00747">
    <property type="entry name" value="GLYHDRLASE47"/>
</dbReference>
<dbReference type="SUPFAM" id="SSF48225">
    <property type="entry name" value="Seven-hairpin glycosidases"/>
    <property type="match status" value="1"/>
</dbReference>
<feature type="chain" id="PRO_0000210315" description="Mannosyl-oligosaccharide 1,2-alpha-mannosidase IC">
    <location>
        <begin position="1"/>
        <end position="630"/>
    </location>
</feature>
<feature type="topological domain" description="Cytoplasmic" evidence="4">
    <location>
        <begin position="1"/>
        <end position="22"/>
    </location>
</feature>
<feature type="transmembrane region" description="Helical; Signal-anchor for type II membrane protein" evidence="4">
    <location>
        <begin position="23"/>
        <end position="43"/>
    </location>
</feature>
<feature type="topological domain" description="Lumenal" evidence="4">
    <location>
        <begin position="44"/>
        <end position="630"/>
    </location>
</feature>
<feature type="region of interest" description="Disordered" evidence="5">
    <location>
        <begin position="74"/>
        <end position="140"/>
    </location>
</feature>
<feature type="compositionally biased region" description="Pro residues" evidence="5">
    <location>
        <begin position="80"/>
        <end position="89"/>
    </location>
</feature>
<feature type="compositionally biased region" description="Basic residues" evidence="5">
    <location>
        <begin position="102"/>
        <end position="113"/>
    </location>
</feature>
<feature type="active site" description="Proton donor" evidence="1">
    <location>
        <position position="499"/>
    </location>
</feature>
<feature type="binding site" evidence="2">
    <location>
        <position position="610"/>
    </location>
    <ligand>
        <name>Ca(2+)</name>
        <dbReference type="ChEBI" id="CHEBI:29108"/>
    </ligand>
</feature>
<feature type="modified residue" description="Phosphoserine" evidence="7">
    <location>
        <position position="164"/>
    </location>
</feature>
<feature type="glycosylation site" description="N-linked (GlcNAc...) asparagine" evidence="4">
    <location>
        <position position="250"/>
    </location>
</feature>
<feature type="glycosylation site" description="N-linked (GlcNAc...) asparagine" evidence="4">
    <location>
        <position position="618"/>
    </location>
</feature>
<feature type="disulfide bond" evidence="2">
    <location>
        <begin position="453"/>
        <end position="485"/>
    </location>
</feature>
<proteinExistence type="evidence at protein level"/>
<keyword id="KW-0106">Calcium</keyword>
<keyword id="KW-1015">Disulfide bond</keyword>
<keyword id="KW-0325">Glycoprotein</keyword>
<keyword id="KW-0326">Glycosidase</keyword>
<keyword id="KW-0333">Golgi apparatus</keyword>
<keyword id="KW-0378">Hydrolase</keyword>
<keyword id="KW-0472">Membrane</keyword>
<keyword id="KW-0479">Metal-binding</keyword>
<keyword id="KW-0597">Phosphoprotein</keyword>
<keyword id="KW-1267">Proteomics identification</keyword>
<keyword id="KW-1185">Reference proteome</keyword>
<keyword id="KW-0735">Signal-anchor</keyword>
<keyword id="KW-0812">Transmembrane</keyword>
<keyword id="KW-1133">Transmembrane helix</keyword>
<protein>
    <recommendedName>
        <fullName>Mannosyl-oligosaccharide 1,2-alpha-mannosidase IC</fullName>
        <ecNumber evidence="2">3.2.1.113</ecNumber>
    </recommendedName>
    <alternativeName>
        <fullName>HMIC</fullName>
    </alternativeName>
    <alternativeName>
        <fullName>Mannosidase alpha class 1C member 1</fullName>
    </alternativeName>
    <alternativeName>
        <fullName>Processing alpha-1,2-mannosidase IC</fullName>
        <shortName>Alpha-1,2-mannosidase IC</shortName>
    </alternativeName>
</protein>
<gene>
    <name type="primary">MAN1C1</name>
    <name type="synonym">MAN1A3</name>
    <name type="synonym">MAN1C</name>
</gene>
<name>MA1C1_HUMAN</name>
<organism>
    <name type="scientific">Homo sapiens</name>
    <name type="common">Human</name>
    <dbReference type="NCBI Taxonomy" id="9606"/>
    <lineage>
        <taxon>Eukaryota</taxon>
        <taxon>Metazoa</taxon>
        <taxon>Chordata</taxon>
        <taxon>Craniata</taxon>
        <taxon>Vertebrata</taxon>
        <taxon>Euteleostomi</taxon>
        <taxon>Mammalia</taxon>
        <taxon>Eutheria</taxon>
        <taxon>Euarchontoglires</taxon>
        <taxon>Primates</taxon>
        <taxon>Haplorrhini</taxon>
        <taxon>Catarrhini</taxon>
        <taxon>Hominidae</taxon>
        <taxon>Homo</taxon>
    </lineage>
</organism>
<sequence length="630" mass="70911">MLMRKVPGFVPASPWGLRLPQKFLFLLFLSGLVTLCFGALFLLPHSSRLKRLFLAPRTQQPGLEVVAEIAGHAPAREQEPPPNPAPAAPAPGEDDPSSWASPRRRKGGLRRTRPTGPREEATAARGNSIPASRPGDEGVPFRFDFNAFRSRLRHPVLGTRADESQEPQSQVRAQREKIKEMMQFAWQSYKRYAMGKNELRPLTKDGYEGNMFGGLSGATVIDSLDTLYLMELKEEFQEAKAWVGESFHLNVSGEASLFEVNIRYIGGLLSAFYLTGEEVFRIKAIRLGEKLLPAFNTPTGIPKGVVSFKSGNWGWATAGSSSILAEFGSLHLEFLHLTELSGNQVFAEKVRNIRKVLRKIEKPFGLYPNFLSPVSGNWVQHHVSVGGLGDSFYEYLIKSWLMSGKTDMEAKNMYYEALEAIETYLLNVSPGGLTYIAEWRGGILDHKMGHLACFSGGMIALGAEDAKEEKRAHYRELAAQITKTCHESYARSDTKLGPEAFWFNSGREAVATQLSESYYILRPEVVESYMYLWRQTHNPIYREWGWEVVLALEKYCRTEAGFSGIQDVYSSTPNHDNKQQSFFLAETLKYLYLLFSEDDLLSLEDWVFNTEAHPLPVNHSDSSGRAWGRH</sequence>
<reference key="1">
    <citation type="journal article" date="2000" name="J. Biol. Chem.">
        <title>Characterization of a cDNA encoding a novel human Golgi alpha 1,2-mannosidase involved in N-glycan biosynthesis.</title>
        <authorList>
            <person name="Tremblay L.O."/>
            <person name="Herscovics A."/>
        </authorList>
    </citation>
    <scope>NUCLEOTIDE SEQUENCE [MRNA]</scope>
    <source>
        <tissue>Brain</tissue>
        <tissue>Eye</tissue>
    </source>
</reference>
<reference key="2">
    <citation type="journal article" date="2006" name="Nature">
        <title>The DNA sequence and biological annotation of human chromosome 1.</title>
        <authorList>
            <person name="Gregory S.G."/>
            <person name="Barlow K.F."/>
            <person name="McLay K.E."/>
            <person name="Kaul R."/>
            <person name="Swarbreck D."/>
            <person name="Dunham A."/>
            <person name="Scott C.E."/>
            <person name="Howe K.L."/>
            <person name="Woodfine K."/>
            <person name="Spencer C.C.A."/>
            <person name="Jones M.C."/>
            <person name="Gillson C."/>
            <person name="Searle S."/>
            <person name="Zhou Y."/>
            <person name="Kokocinski F."/>
            <person name="McDonald L."/>
            <person name="Evans R."/>
            <person name="Phillips K."/>
            <person name="Atkinson A."/>
            <person name="Cooper R."/>
            <person name="Jones C."/>
            <person name="Hall R.E."/>
            <person name="Andrews T.D."/>
            <person name="Lloyd C."/>
            <person name="Ainscough R."/>
            <person name="Almeida J.P."/>
            <person name="Ambrose K.D."/>
            <person name="Anderson F."/>
            <person name="Andrew R.W."/>
            <person name="Ashwell R.I.S."/>
            <person name="Aubin K."/>
            <person name="Babbage A.K."/>
            <person name="Bagguley C.L."/>
            <person name="Bailey J."/>
            <person name="Beasley H."/>
            <person name="Bethel G."/>
            <person name="Bird C.P."/>
            <person name="Bray-Allen S."/>
            <person name="Brown J.Y."/>
            <person name="Brown A.J."/>
            <person name="Buckley D."/>
            <person name="Burton J."/>
            <person name="Bye J."/>
            <person name="Carder C."/>
            <person name="Chapman J.C."/>
            <person name="Clark S.Y."/>
            <person name="Clarke G."/>
            <person name="Clee C."/>
            <person name="Cobley V."/>
            <person name="Collier R.E."/>
            <person name="Corby N."/>
            <person name="Coville G.J."/>
            <person name="Davies J."/>
            <person name="Deadman R."/>
            <person name="Dunn M."/>
            <person name="Earthrowl M."/>
            <person name="Ellington A.G."/>
            <person name="Errington H."/>
            <person name="Frankish A."/>
            <person name="Frankland J."/>
            <person name="French L."/>
            <person name="Garner P."/>
            <person name="Garnett J."/>
            <person name="Gay L."/>
            <person name="Ghori M.R.J."/>
            <person name="Gibson R."/>
            <person name="Gilby L.M."/>
            <person name="Gillett W."/>
            <person name="Glithero R.J."/>
            <person name="Grafham D.V."/>
            <person name="Griffiths C."/>
            <person name="Griffiths-Jones S."/>
            <person name="Grocock R."/>
            <person name="Hammond S."/>
            <person name="Harrison E.S.I."/>
            <person name="Hart E."/>
            <person name="Haugen E."/>
            <person name="Heath P.D."/>
            <person name="Holmes S."/>
            <person name="Holt K."/>
            <person name="Howden P.J."/>
            <person name="Hunt A.R."/>
            <person name="Hunt S.E."/>
            <person name="Hunter G."/>
            <person name="Isherwood J."/>
            <person name="James R."/>
            <person name="Johnson C."/>
            <person name="Johnson D."/>
            <person name="Joy A."/>
            <person name="Kay M."/>
            <person name="Kershaw J.K."/>
            <person name="Kibukawa M."/>
            <person name="Kimberley A.M."/>
            <person name="King A."/>
            <person name="Knights A.J."/>
            <person name="Lad H."/>
            <person name="Laird G."/>
            <person name="Lawlor S."/>
            <person name="Leongamornlert D.A."/>
            <person name="Lloyd D.M."/>
            <person name="Loveland J."/>
            <person name="Lovell J."/>
            <person name="Lush M.J."/>
            <person name="Lyne R."/>
            <person name="Martin S."/>
            <person name="Mashreghi-Mohammadi M."/>
            <person name="Matthews L."/>
            <person name="Matthews N.S.W."/>
            <person name="McLaren S."/>
            <person name="Milne S."/>
            <person name="Mistry S."/>
            <person name="Moore M.J.F."/>
            <person name="Nickerson T."/>
            <person name="O'Dell C.N."/>
            <person name="Oliver K."/>
            <person name="Palmeiri A."/>
            <person name="Palmer S.A."/>
            <person name="Parker A."/>
            <person name="Patel D."/>
            <person name="Pearce A.V."/>
            <person name="Peck A.I."/>
            <person name="Pelan S."/>
            <person name="Phelps K."/>
            <person name="Phillimore B.J."/>
            <person name="Plumb R."/>
            <person name="Rajan J."/>
            <person name="Raymond C."/>
            <person name="Rouse G."/>
            <person name="Saenphimmachak C."/>
            <person name="Sehra H.K."/>
            <person name="Sheridan E."/>
            <person name="Shownkeen R."/>
            <person name="Sims S."/>
            <person name="Skuce C.D."/>
            <person name="Smith M."/>
            <person name="Steward C."/>
            <person name="Subramanian S."/>
            <person name="Sycamore N."/>
            <person name="Tracey A."/>
            <person name="Tromans A."/>
            <person name="Van Helmond Z."/>
            <person name="Wall M."/>
            <person name="Wallis J.M."/>
            <person name="White S."/>
            <person name="Whitehead S.L."/>
            <person name="Wilkinson J.E."/>
            <person name="Willey D.L."/>
            <person name="Williams H."/>
            <person name="Wilming L."/>
            <person name="Wray P.W."/>
            <person name="Wu Z."/>
            <person name="Coulson A."/>
            <person name="Vaudin M."/>
            <person name="Sulston J.E."/>
            <person name="Durbin R.M."/>
            <person name="Hubbard T."/>
            <person name="Wooster R."/>
            <person name="Dunham I."/>
            <person name="Carter N.P."/>
            <person name="McVean G."/>
            <person name="Ross M.T."/>
            <person name="Harrow J."/>
            <person name="Olson M.V."/>
            <person name="Beck S."/>
            <person name="Rogers J."/>
            <person name="Bentley D.R."/>
        </authorList>
    </citation>
    <scope>NUCLEOTIDE SEQUENCE [LARGE SCALE GENOMIC DNA]</scope>
</reference>
<reference key="3">
    <citation type="journal article" date="2004" name="Genome Res.">
        <title>The status, quality, and expansion of the NIH full-length cDNA project: the Mammalian Gene Collection (MGC).</title>
        <authorList>
            <consortium name="The MGC Project Team"/>
        </authorList>
    </citation>
    <scope>NUCLEOTIDE SEQUENCE [LARGE SCALE MRNA]</scope>
    <source>
        <tissue>Brain</tissue>
    </source>
</reference>
<reference key="4">
    <citation type="journal article" date="2014" name="J. Proteomics">
        <title>An enzyme assisted RP-RPLC approach for in-depth analysis of human liver phosphoproteome.</title>
        <authorList>
            <person name="Bian Y."/>
            <person name="Song C."/>
            <person name="Cheng K."/>
            <person name="Dong M."/>
            <person name="Wang F."/>
            <person name="Huang J."/>
            <person name="Sun D."/>
            <person name="Wang L."/>
            <person name="Ye M."/>
            <person name="Zou H."/>
        </authorList>
    </citation>
    <scope>PHOSPHORYLATION [LARGE SCALE ANALYSIS] AT SER-164</scope>
    <scope>IDENTIFICATION BY MASS SPECTROMETRY [LARGE SCALE ANALYSIS]</scope>
    <source>
        <tissue>Liver</tissue>
    </source>
</reference>